<accession>B7USL2</accession>
<reference key="1">
    <citation type="journal article" date="2009" name="J. Bacteriol.">
        <title>Complete genome sequence and comparative genome analysis of enteropathogenic Escherichia coli O127:H6 strain E2348/69.</title>
        <authorList>
            <person name="Iguchi A."/>
            <person name="Thomson N.R."/>
            <person name="Ogura Y."/>
            <person name="Saunders D."/>
            <person name="Ooka T."/>
            <person name="Henderson I.R."/>
            <person name="Harris D."/>
            <person name="Asadulghani M."/>
            <person name="Kurokawa K."/>
            <person name="Dean P."/>
            <person name="Kenny B."/>
            <person name="Quail M.A."/>
            <person name="Thurston S."/>
            <person name="Dougan G."/>
            <person name="Hayashi T."/>
            <person name="Parkhill J."/>
            <person name="Frankel G."/>
        </authorList>
    </citation>
    <scope>NUCLEOTIDE SEQUENCE [LARGE SCALE GENOMIC DNA]</scope>
    <source>
        <strain>E2348/69 / EPEC</strain>
    </source>
</reference>
<feature type="chain" id="PRO_1000185640" description="Ribosomal RNA small subunit methyltransferase F">
    <location>
        <begin position="1"/>
        <end position="479"/>
    </location>
</feature>
<feature type="active site" description="Nucleophile" evidence="1">
    <location>
        <position position="247"/>
    </location>
</feature>
<feature type="binding site" evidence="1">
    <location>
        <begin position="125"/>
        <end position="131"/>
    </location>
    <ligand>
        <name>S-adenosyl-L-methionine</name>
        <dbReference type="ChEBI" id="CHEBI:59789"/>
    </ligand>
</feature>
<feature type="binding site" evidence="1">
    <location>
        <position position="149"/>
    </location>
    <ligand>
        <name>S-adenosyl-L-methionine</name>
        <dbReference type="ChEBI" id="CHEBI:59789"/>
    </ligand>
</feature>
<feature type="binding site" evidence="1">
    <location>
        <position position="176"/>
    </location>
    <ligand>
        <name>S-adenosyl-L-methionine</name>
        <dbReference type="ChEBI" id="CHEBI:59789"/>
    </ligand>
</feature>
<feature type="binding site" evidence="1">
    <location>
        <position position="194"/>
    </location>
    <ligand>
        <name>S-adenosyl-L-methionine</name>
        <dbReference type="ChEBI" id="CHEBI:59789"/>
    </ligand>
</feature>
<gene>
    <name evidence="1" type="primary">rsmF</name>
    <name type="ordered locus">E2348C_1960</name>
</gene>
<name>RSMF_ECO27</name>
<keyword id="KW-0963">Cytoplasm</keyword>
<keyword id="KW-0489">Methyltransferase</keyword>
<keyword id="KW-1185">Reference proteome</keyword>
<keyword id="KW-0694">RNA-binding</keyword>
<keyword id="KW-0698">rRNA processing</keyword>
<keyword id="KW-0949">S-adenosyl-L-methionine</keyword>
<keyword id="KW-0808">Transferase</keyword>
<proteinExistence type="inferred from homology"/>
<protein>
    <recommendedName>
        <fullName evidence="1">Ribosomal RNA small subunit methyltransferase F</fullName>
        <ecNumber evidence="1">2.1.1.178</ecNumber>
    </recommendedName>
    <alternativeName>
        <fullName evidence="1">16S rRNA m5C1407 methyltransferase</fullName>
    </alternativeName>
    <alternativeName>
        <fullName evidence="1">rRNA (cytosine-C(5)-)-methyltransferase RsmF</fullName>
    </alternativeName>
</protein>
<evidence type="ECO:0000255" key="1">
    <source>
        <dbReference type="HAMAP-Rule" id="MF_01579"/>
    </source>
</evidence>
<comment type="function">
    <text evidence="1">Specifically methylates the cytosine at position 1407 (m5C1407) of 16S rRNA.</text>
</comment>
<comment type="catalytic activity">
    <reaction evidence="1">
        <text>cytidine(1407) in 16S rRNA + S-adenosyl-L-methionine = 5-methylcytidine(1407) in 16S rRNA + S-adenosyl-L-homocysteine + H(+)</text>
        <dbReference type="Rhea" id="RHEA:42756"/>
        <dbReference type="Rhea" id="RHEA-COMP:10223"/>
        <dbReference type="Rhea" id="RHEA-COMP:10224"/>
        <dbReference type="ChEBI" id="CHEBI:15378"/>
        <dbReference type="ChEBI" id="CHEBI:57856"/>
        <dbReference type="ChEBI" id="CHEBI:59789"/>
        <dbReference type="ChEBI" id="CHEBI:74483"/>
        <dbReference type="ChEBI" id="CHEBI:82748"/>
        <dbReference type="EC" id="2.1.1.178"/>
    </reaction>
</comment>
<comment type="subcellular location">
    <subcellularLocation>
        <location evidence="1">Cytoplasm</location>
    </subcellularLocation>
</comment>
<comment type="similarity">
    <text evidence="1">Belongs to the class I-like SAM-binding methyltransferase superfamily. RsmB/NOP family.</text>
</comment>
<organism>
    <name type="scientific">Escherichia coli O127:H6 (strain E2348/69 / EPEC)</name>
    <dbReference type="NCBI Taxonomy" id="574521"/>
    <lineage>
        <taxon>Bacteria</taxon>
        <taxon>Pseudomonadati</taxon>
        <taxon>Pseudomonadota</taxon>
        <taxon>Gammaproteobacteria</taxon>
        <taxon>Enterobacterales</taxon>
        <taxon>Enterobacteriaceae</taxon>
        <taxon>Escherichia</taxon>
    </lineage>
</organism>
<dbReference type="EC" id="2.1.1.178" evidence="1"/>
<dbReference type="EMBL" id="FM180568">
    <property type="protein sequence ID" value="CAS09508.1"/>
    <property type="molecule type" value="Genomic_DNA"/>
</dbReference>
<dbReference type="RefSeq" id="WP_001339709.1">
    <property type="nucleotide sequence ID" value="NC_011601.1"/>
</dbReference>
<dbReference type="SMR" id="B7USL2"/>
<dbReference type="KEGG" id="ecg:E2348C_1960"/>
<dbReference type="HOGENOM" id="CLU_005316_6_2_6"/>
<dbReference type="Proteomes" id="UP000008205">
    <property type="component" value="Chromosome"/>
</dbReference>
<dbReference type="GO" id="GO:0005737">
    <property type="term" value="C:cytoplasm"/>
    <property type="evidence" value="ECO:0007669"/>
    <property type="project" value="UniProtKB-SubCell"/>
</dbReference>
<dbReference type="GO" id="GO:0003723">
    <property type="term" value="F:RNA binding"/>
    <property type="evidence" value="ECO:0007669"/>
    <property type="project" value="UniProtKB-KW"/>
</dbReference>
<dbReference type="GO" id="GO:0009383">
    <property type="term" value="F:rRNA (cytosine-C5-)-methyltransferase activity"/>
    <property type="evidence" value="ECO:0007669"/>
    <property type="project" value="TreeGrafter"/>
</dbReference>
<dbReference type="GO" id="GO:0070475">
    <property type="term" value="P:rRNA base methylation"/>
    <property type="evidence" value="ECO:0007669"/>
    <property type="project" value="TreeGrafter"/>
</dbReference>
<dbReference type="CDD" id="cd02440">
    <property type="entry name" value="AdoMet_MTases"/>
    <property type="match status" value="1"/>
</dbReference>
<dbReference type="FunFam" id="3.10.450.720:FF:000001">
    <property type="entry name" value="Ribosomal RNA small subunit methyltransferase F"/>
    <property type="match status" value="1"/>
</dbReference>
<dbReference type="FunFam" id="3.40.50.150:FF:000079">
    <property type="entry name" value="Ribosomal RNA small subunit methyltransferase F"/>
    <property type="match status" value="1"/>
</dbReference>
<dbReference type="Gene3D" id="3.10.450.720">
    <property type="match status" value="1"/>
</dbReference>
<dbReference type="Gene3D" id="3.40.50.150">
    <property type="entry name" value="Vaccinia Virus protein VP39"/>
    <property type="match status" value="1"/>
</dbReference>
<dbReference type="HAMAP" id="MF_01579">
    <property type="entry name" value="16SrRNA_methyltr_F"/>
    <property type="match status" value="1"/>
</dbReference>
<dbReference type="InterPro" id="IPR031341">
    <property type="entry name" value="Methyltr_RsmF_N"/>
</dbReference>
<dbReference type="InterPro" id="IPR049560">
    <property type="entry name" value="MeTrfase_RsmB-F_NOP2_cat"/>
</dbReference>
<dbReference type="InterPro" id="IPR001678">
    <property type="entry name" value="MeTrfase_RsmB-F_NOP2_dom"/>
</dbReference>
<dbReference type="InterPro" id="IPR027391">
    <property type="entry name" value="Nol1_Nop2_Fmu_2"/>
</dbReference>
<dbReference type="InterPro" id="IPR011023">
    <property type="entry name" value="Nop2p"/>
</dbReference>
<dbReference type="InterPro" id="IPR023267">
    <property type="entry name" value="RCMT"/>
</dbReference>
<dbReference type="InterPro" id="IPR023545">
    <property type="entry name" value="rRNA_ssu_MeTfrase_F"/>
</dbReference>
<dbReference type="InterPro" id="IPR018314">
    <property type="entry name" value="RsmB/NOL1/NOP2-like_CS"/>
</dbReference>
<dbReference type="InterPro" id="IPR029063">
    <property type="entry name" value="SAM-dependent_MTases_sf"/>
</dbReference>
<dbReference type="InterPro" id="IPR048457">
    <property type="entry name" value="YebU_pre-PUA_dom"/>
</dbReference>
<dbReference type="NCBIfam" id="TIGR00446">
    <property type="entry name" value="nop2p"/>
    <property type="match status" value="1"/>
</dbReference>
<dbReference type="NCBIfam" id="NF008898">
    <property type="entry name" value="PRK11933.1"/>
    <property type="match status" value="1"/>
</dbReference>
<dbReference type="PANTHER" id="PTHR22807:SF30">
    <property type="entry name" value="28S RRNA (CYTOSINE(4447)-C(5))-METHYLTRANSFERASE-RELATED"/>
    <property type="match status" value="1"/>
</dbReference>
<dbReference type="PANTHER" id="PTHR22807">
    <property type="entry name" value="NOP2 YEAST -RELATED NOL1/NOP2/FMU SUN DOMAIN-CONTAINING"/>
    <property type="match status" value="1"/>
</dbReference>
<dbReference type="Pfam" id="PF01189">
    <property type="entry name" value="Methyltr_RsmB-F"/>
    <property type="match status" value="1"/>
</dbReference>
<dbReference type="Pfam" id="PF17125">
    <property type="entry name" value="Methyltr_RsmF_N"/>
    <property type="match status" value="1"/>
</dbReference>
<dbReference type="Pfam" id="PF13636">
    <property type="entry name" value="Methyltranf_PUA"/>
    <property type="match status" value="1"/>
</dbReference>
<dbReference type="Pfam" id="PF21150">
    <property type="entry name" value="YebU_pre-PUA_dom"/>
    <property type="match status" value="1"/>
</dbReference>
<dbReference type="PRINTS" id="PR02008">
    <property type="entry name" value="RCMTFAMILY"/>
</dbReference>
<dbReference type="SUPFAM" id="SSF53335">
    <property type="entry name" value="S-adenosyl-L-methionine-dependent methyltransferases"/>
    <property type="match status" value="1"/>
</dbReference>
<dbReference type="PROSITE" id="PS01153">
    <property type="entry name" value="NOL1_NOP2_SUN"/>
    <property type="match status" value="1"/>
</dbReference>
<dbReference type="PROSITE" id="PS51686">
    <property type="entry name" value="SAM_MT_RSMB_NOP"/>
    <property type="match status" value="1"/>
</dbReference>
<sequence>MAQHTVYFPDAFLTQMREAMPSTLSFDDFLAACQRPLRRSIRVNTLKTSVADFLQLTAPYGWTLTPIPWCEEGFWIERDSEDALPLGSTAEHLSGLFYIQEASSMLPVAALFADGNAPQRVMDVAAAPGSKTTQIAARMNNEGAILANEFSASRVKVLHANISRCGISNVALTHFDGRVFGAAVPEMFDAILLDAPCSGEGVVRKDPDALKNWSPESNQEIAATQRELIDSAFHALRPGGTLVYSTCTLNREENEAVCLWLKETYPDAVEFLPLGDLFPGANKALTEEGFLHVFPQIYDCEGFFVARLRKTQAIPVLPAPKYKVGNFPFSPVKDREAGQIRQAAASVGLNWDENLRLWQRDKELWLFPVGIEALIGKVRFSRLGIKLAETHNKGYRWQHEAVIALASPDNVNAFELTPQEAEEWYRGRDVYPQAAPVADDVLVTFQHQPIGLAKRIGSRLKNSYPRELVRDGKLFTGNA</sequence>